<proteinExistence type="inferred from homology"/>
<sequence length="319" mass="34432">MKTFGKKVVLIGDGSVGSSYAFAMVTQGVADEFVIIDIAKDKVKADVQDLNHGTVHSPSPVDVKAGEYEDCKDADLVVITAGAPQKPGETRLQLVEKNTKIMKSIVKSVMDSGFDGYFLIAANPVDILTRFVKEYTGLPAERVIGSGTVLDSARLQYLISQELGVAPSSVDASIIGEHGDTELAVWSQANVAGISVYDTLKEQTGSEAKAEEIYVNTRDAAYEIIQAKGSTYYGIALALMRISKAILNNENNVLNVSIQLDGQYGGHKGVYLGVPTLVNQHGAVKIYEMPLSAEEQALFDKSVKILEDTFDSIKYLLED</sequence>
<comment type="function">
    <text evidence="1 2">Catalyzes the conversion of lactate to pyruvate (Potential). Contributes to S.aureus growth during nitrosative stress in both aerobically and anaerobically cultured cells, despite playing a secondary role in this resistance mechanism (By similarity).</text>
</comment>
<comment type="catalytic activity">
    <reaction evidence="2">
        <text>(S)-lactate + NAD(+) = pyruvate + NADH + H(+)</text>
        <dbReference type="Rhea" id="RHEA:23444"/>
        <dbReference type="ChEBI" id="CHEBI:15361"/>
        <dbReference type="ChEBI" id="CHEBI:15378"/>
        <dbReference type="ChEBI" id="CHEBI:16651"/>
        <dbReference type="ChEBI" id="CHEBI:57540"/>
        <dbReference type="ChEBI" id="CHEBI:57945"/>
        <dbReference type="EC" id="1.1.1.27"/>
    </reaction>
</comment>
<comment type="pathway">
    <text evidence="2">Fermentation; pyruvate fermentation to lactate; (S)-lactate from pyruvate: step 1/1.</text>
</comment>
<comment type="subunit">
    <text evidence="2">Homotetramer.</text>
</comment>
<comment type="subcellular location">
    <subcellularLocation>
        <location evidence="2">Cytoplasm</location>
    </subcellularLocation>
</comment>
<comment type="similarity">
    <text evidence="2 3">Belongs to the LDH/MDH superfamily. LDH family.</text>
</comment>
<keyword id="KW-0963">Cytoplasm</keyword>
<keyword id="KW-0520">NAD</keyword>
<keyword id="KW-0560">Oxidoreductase</keyword>
<keyword id="KW-0597">Phosphoprotein</keyword>
<keyword id="KW-0346">Stress response</keyword>
<reference key="1">
    <citation type="submission" date="2007-05" db="EMBL/GenBank/DDBJ databases">
        <title>Complete sequence of chromosome of Staphylococcus aureus subsp. aureus JH9.</title>
        <authorList>
            <consortium name="US DOE Joint Genome Institute"/>
            <person name="Copeland A."/>
            <person name="Lucas S."/>
            <person name="Lapidus A."/>
            <person name="Barry K."/>
            <person name="Detter J.C."/>
            <person name="Glavina del Rio T."/>
            <person name="Hammon N."/>
            <person name="Israni S."/>
            <person name="Pitluck S."/>
            <person name="Chain P."/>
            <person name="Malfatti S."/>
            <person name="Shin M."/>
            <person name="Vergez L."/>
            <person name="Schmutz J."/>
            <person name="Larimer F."/>
            <person name="Land M."/>
            <person name="Hauser L."/>
            <person name="Kyrpides N."/>
            <person name="Kim E."/>
            <person name="Tomasz A."/>
            <person name="Richardson P."/>
        </authorList>
    </citation>
    <scope>NUCLEOTIDE SEQUENCE [LARGE SCALE GENOMIC DNA]</scope>
    <source>
        <strain>JH9</strain>
    </source>
</reference>
<organism>
    <name type="scientific">Staphylococcus aureus (strain JH9)</name>
    <dbReference type="NCBI Taxonomy" id="359786"/>
    <lineage>
        <taxon>Bacteria</taxon>
        <taxon>Bacillati</taxon>
        <taxon>Bacillota</taxon>
        <taxon>Bacilli</taxon>
        <taxon>Bacillales</taxon>
        <taxon>Staphylococcaceae</taxon>
        <taxon>Staphylococcus</taxon>
    </lineage>
</organism>
<evidence type="ECO:0000250" key="1">
    <source>
        <dbReference type="UniProtKB" id="Q5HCV0"/>
    </source>
</evidence>
<evidence type="ECO:0000255" key="2">
    <source>
        <dbReference type="HAMAP-Rule" id="MF_00488"/>
    </source>
</evidence>
<evidence type="ECO:0000305" key="3"/>
<feature type="chain" id="PRO_0000343837" description="L-lactate dehydrogenase 2">
    <location>
        <begin position="1"/>
        <end position="319"/>
    </location>
</feature>
<feature type="active site" description="Proton acceptor" evidence="2">
    <location>
        <position position="178"/>
    </location>
</feature>
<feature type="binding site" evidence="2">
    <location>
        <position position="16"/>
    </location>
    <ligand>
        <name>NAD(+)</name>
        <dbReference type="ChEBI" id="CHEBI:57540"/>
    </ligand>
</feature>
<feature type="binding site" evidence="2">
    <location>
        <position position="37"/>
    </location>
    <ligand>
        <name>NAD(+)</name>
        <dbReference type="ChEBI" id="CHEBI:57540"/>
    </ligand>
</feature>
<feature type="binding site" evidence="2">
    <location>
        <position position="42"/>
    </location>
    <ligand>
        <name>NAD(+)</name>
        <dbReference type="ChEBI" id="CHEBI:57540"/>
    </ligand>
</feature>
<feature type="binding site" evidence="2">
    <location>
        <position position="68"/>
    </location>
    <ligand>
        <name>NAD(+)</name>
        <dbReference type="ChEBI" id="CHEBI:57540"/>
    </ligand>
</feature>
<feature type="binding site" evidence="2">
    <location>
        <begin position="82"/>
        <end position="83"/>
    </location>
    <ligand>
        <name>NAD(+)</name>
        <dbReference type="ChEBI" id="CHEBI:57540"/>
    </ligand>
</feature>
<feature type="binding site" evidence="2">
    <location>
        <position position="85"/>
    </location>
    <ligand>
        <name>substrate</name>
    </ligand>
</feature>
<feature type="binding site" evidence="2">
    <location>
        <position position="91"/>
    </location>
    <ligand>
        <name>substrate</name>
    </ligand>
</feature>
<feature type="binding site" evidence="2">
    <location>
        <position position="104"/>
    </location>
    <ligand>
        <name>NAD(+)</name>
        <dbReference type="ChEBI" id="CHEBI:57540"/>
    </ligand>
</feature>
<feature type="binding site" evidence="2">
    <location>
        <begin position="121"/>
        <end position="123"/>
    </location>
    <ligand>
        <name>NAD(+)</name>
        <dbReference type="ChEBI" id="CHEBI:57540"/>
    </ligand>
</feature>
<feature type="binding site" evidence="2">
    <location>
        <begin position="123"/>
        <end position="126"/>
    </location>
    <ligand>
        <name>substrate</name>
    </ligand>
</feature>
<feature type="binding site" evidence="2">
    <location>
        <position position="146"/>
    </location>
    <ligand>
        <name>NAD(+)</name>
        <dbReference type="ChEBI" id="CHEBI:57540"/>
    </ligand>
</feature>
<feature type="binding site" evidence="2">
    <location>
        <begin position="151"/>
        <end position="154"/>
    </location>
    <ligand>
        <name>substrate</name>
    </ligand>
</feature>
<feature type="binding site" evidence="2">
    <location>
        <position position="231"/>
    </location>
    <ligand>
        <name>substrate</name>
    </ligand>
</feature>
<feature type="modified residue" description="Phosphotyrosine" evidence="2">
    <location>
        <position position="222"/>
    </location>
</feature>
<name>LDH2_STAA9</name>
<gene>
    <name evidence="2" type="primary">ldh2</name>
    <name type="ordered locus">SaurJH9_2624</name>
</gene>
<dbReference type="EC" id="1.1.1.27" evidence="2"/>
<dbReference type="EMBL" id="CP000703">
    <property type="protein sequence ID" value="ABQ50400.1"/>
    <property type="molecule type" value="Genomic_DNA"/>
</dbReference>
<dbReference type="RefSeq" id="WP_000846636.1">
    <property type="nucleotide sequence ID" value="NC_009487.1"/>
</dbReference>
<dbReference type="SMR" id="A5IW27"/>
<dbReference type="KEGG" id="saj:SaurJH9_2624"/>
<dbReference type="HOGENOM" id="CLU_045401_1_1_9"/>
<dbReference type="UniPathway" id="UPA00554">
    <property type="reaction ID" value="UER00611"/>
</dbReference>
<dbReference type="GO" id="GO:0005737">
    <property type="term" value="C:cytoplasm"/>
    <property type="evidence" value="ECO:0007669"/>
    <property type="project" value="UniProtKB-SubCell"/>
</dbReference>
<dbReference type="GO" id="GO:0004459">
    <property type="term" value="F:L-lactate dehydrogenase activity"/>
    <property type="evidence" value="ECO:0007669"/>
    <property type="project" value="UniProtKB-UniRule"/>
</dbReference>
<dbReference type="GO" id="GO:0006096">
    <property type="term" value="P:glycolytic process"/>
    <property type="evidence" value="ECO:0007669"/>
    <property type="project" value="UniProtKB-UniRule"/>
</dbReference>
<dbReference type="GO" id="GO:0006089">
    <property type="term" value="P:lactate metabolic process"/>
    <property type="evidence" value="ECO:0007669"/>
    <property type="project" value="TreeGrafter"/>
</dbReference>
<dbReference type="CDD" id="cd05291">
    <property type="entry name" value="HicDH_like"/>
    <property type="match status" value="1"/>
</dbReference>
<dbReference type="FunFam" id="3.40.50.720:FF:000018">
    <property type="entry name" value="Malate dehydrogenase"/>
    <property type="match status" value="1"/>
</dbReference>
<dbReference type="Gene3D" id="3.90.110.10">
    <property type="entry name" value="Lactate dehydrogenase/glycoside hydrolase, family 4, C-terminal"/>
    <property type="match status" value="1"/>
</dbReference>
<dbReference type="Gene3D" id="3.40.50.720">
    <property type="entry name" value="NAD(P)-binding Rossmann-like Domain"/>
    <property type="match status" value="1"/>
</dbReference>
<dbReference type="HAMAP" id="MF_00488">
    <property type="entry name" value="Lactate_dehydrog"/>
    <property type="match status" value="1"/>
</dbReference>
<dbReference type="InterPro" id="IPR001557">
    <property type="entry name" value="L-lactate/malate_DH"/>
</dbReference>
<dbReference type="InterPro" id="IPR011304">
    <property type="entry name" value="L-lactate_DH"/>
</dbReference>
<dbReference type="InterPro" id="IPR018177">
    <property type="entry name" value="L-lactate_DH_AS"/>
</dbReference>
<dbReference type="InterPro" id="IPR022383">
    <property type="entry name" value="Lactate/malate_DH_C"/>
</dbReference>
<dbReference type="InterPro" id="IPR001236">
    <property type="entry name" value="Lactate/malate_DH_N"/>
</dbReference>
<dbReference type="InterPro" id="IPR015955">
    <property type="entry name" value="Lactate_DH/Glyco_Ohase_4_C"/>
</dbReference>
<dbReference type="InterPro" id="IPR036291">
    <property type="entry name" value="NAD(P)-bd_dom_sf"/>
</dbReference>
<dbReference type="NCBIfam" id="TIGR01771">
    <property type="entry name" value="L-LDH-NAD"/>
    <property type="match status" value="1"/>
</dbReference>
<dbReference type="NCBIfam" id="NF000824">
    <property type="entry name" value="PRK00066.1"/>
    <property type="match status" value="1"/>
</dbReference>
<dbReference type="PANTHER" id="PTHR43128">
    <property type="entry name" value="L-2-HYDROXYCARBOXYLATE DEHYDROGENASE (NAD(P)(+))"/>
    <property type="match status" value="1"/>
</dbReference>
<dbReference type="PANTHER" id="PTHR43128:SF16">
    <property type="entry name" value="L-LACTATE DEHYDROGENASE"/>
    <property type="match status" value="1"/>
</dbReference>
<dbReference type="Pfam" id="PF02866">
    <property type="entry name" value="Ldh_1_C"/>
    <property type="match status" value="1"/>
</dbReference>
<dbReference type="Pfam" id="PF00056">
    <property type="entry name" value="Ldh_1_N"/>
    <property type="match status" value="1"/>
</dbReference>
<dbReference type="PIRSF" id="PIRSF000102">
    <property type="entry name" value="Lac_mal_DH"/>
    <property type="match status" value="1"/>
</dbReference>
<dbReference type="PRINTS" id="PR00086">
    <property type="entry name" value="LLDHDRGNASE"/>
</dbReference>
<dbReference type="SUPFAM" id="SSF56327">
    <property type="entry name" value="LDH C-terminal domain-like"/>
    <property type="match status" value="1"/>
</dbReference>
<dbReference type="SUPFAM" id="SSF51735">
    <property type="entry name" value="NAD(P)-binding Rossmann-fold domains"/>
    <property type="match status" value="1"/>
</dbReference>
<dbReference type="PROSITE" id="PS00064">
    <property type="entry name" value="L_LDH"/>
    <property type="match status" value="1"/>
</dbReference>
<accession>A5IW27</accession>
<protein>
    <recommendedName>
        <fullName evidence="2">L-lactate dehydrogenase 2</fullName>
        <shortName evidence="2">L-LDH 2</shortName>
        <ecNumber evidence="2">1.1.1.27</ecNumber>
    </recommendedName>
</protein>